<accession>A4J015</accession>
<organism>
    <name type="scientific">Francisella tularensis subsp. tularensis (strain WY96-3418)</name>
    <dbReference type="NCBI Taxonomy" id="418136"/>
    <lineage>
        <taxon>Bacteria</taxon>
        <taxon>Pseudomonadati</taxon>
        <taxon>Pseudomonadota</taxon>
        <taxon>Gammaproteobacteria</taxon>
        <taxon>Thiotrichales</taxon>
        <taxon>Francisellaceae</taxon>
        <taxon>Francisella</taxon>
    </lineage>
</organism>
<sequence>MKANHIRILLLVTIAIMFISLMGKWEQTFPADNTKQQTSATQNNSHYDNADSSTNTDVTTTDAKSSLAKETNFSKYDNAKSITINTGVFKDVKVSLLDGAIISASLKDYSISLDDKTPMSLLTDKSGSEYIAKSTIVVNKQPISVNFEDQGIKIENGKQILTLTGSADGLQITRTYTFDDTKYNISVSQNIKNTTSAPVNVIVDDSFARDFDPAGDSFSLLNAHSYTFTGVAYSTAKDSFRKESFKDISKTNGQPTVINSDGQGWVAFLQHYFVSAWIPQSTNAKIYYKNLNGDVFEAGAFTGATIAPNQSENISSILYTGPIIKANLVDLAPNLEKTLDYGMLSFFSEIIFWVMNHIHSLVGNWGLAIILVTCLIKLIFYPLSAKSYRSMAKMRMLQPRIKRLQETYKDDRQALGKKMMELYKEEKVNPLSGCLPMLIQIPIFISLYWVLLESVELRQAPFIFWIHDLSMKDPYFVLPVLMGLSMFLQQKLSPAPADPMQAKVMMFLPVIFTFLFASFPSGLVLYWLTNNLISISQQWIITRHYQATHKK</sequence>
<feature type="chain" id="PRO_1000070099" description="Membrane protein insertase YidC">
    <location>
        <begin position="1"/>
        <end position="551"/>
    </location>
</feature>
<feature type="transmembrane region" description="Helical" evidence="1">
    <location>
        <begin position="3"/>
        <end position="23"/>
    </location>
</feature>
<feature type="transmembrane region" description="Helical" evidence="1">
    <location>
        <begin position="361"/>
        <end position="381"/>
    </location>
</feature>
<feature type="transmembrane region" description="Helical" evidence="1">
    <location>
        <begin position="431"/>
        <end position="451"/>
    </location>
</feature>
<feature type="transmembrane region" description="Helical" evidence="1">
    <location>
        <begin position="504"/>
        <end position="524"/>
    </location>
</feature>
<feature type="region of interest" description="Disordered" evidence="2">
    <location>
        <begin position="33"/>
        <end position="59"/>
    </location>
</feature>
<feature type="compositionally biased region" description="Polar residues" evidence="2">
    <location>
        <begin position="33"/>
        <end position="47"/>
    </location>
</feature>
<feature type="compositionally biased region" description="Low complexity" evidence="2">
    <location>
        <begin position="50"/>
        <end position="59"/>
    </location>
</feature>
<dbReference type="EMBL" id="CP000608">
    <property type="protein sequence ID" value="ABO47516.1"/>
    <property type="molecule type" value="Genomic_DNA"/>
</dbReference>
<dbReference type="RefSeq" id="WP_003021785.1">
    <property type="nucleotide sequence ID" value="NC_009257.1"/>
</dbReference>
<dbReference type="SMR" id="A4J015"/>
<dbReference type="KEGG" id="ftw:FTW_1856"/>
<dbReference type="HOGENOM" id="CLU_016535_3_0_6"/>
<dbReference type="GO" id="GO:0005886">
    <property type="term" value="C:plasma membrane"/>
    <property type="evidence" value="ECO:0007669"/>
    <property type="project" value="UniProtKB-SubCell"/>
</dbReference>
<dbReference type="GO" id="GO:0032977">
    <property type="term" value="F:membrane insertase activity"/>
    <property type="evidence" value="ECO:0007669"/>
    <property type="project" value="InterPro"/>
</dbReference>
<dbReference type="GO" id="GO:0051205">
    <property type="term" value="P:protein insertion into membrane"/>
    <property type="evidence" value="ECO:0007669"/>
    <property type="project" value="TreeGrafter"/>
</dbReference>
<dbReference type="GO" id="GO:0015031">
    <property type="term" value="P:protein transport"/>
    <property type="evidence" value="ECO:0007669"/>
    <property type="project" value="UniProtKB-KW"/>
</dbReference>
<dbReference type="CDD" id="cd20070">
    <property type="entry name" value="5TM_YidC_Alb3"/>
    <property type="match status" value="1"/>
</dbReference>
<dbReference type="CDD" id="cd19961">
    <property type="entry name" value="EcYidC-like_peri"/>
    <property type="match status" value="1"/>
</dbReference>
<dbReference type="Gene3D" id="2.70.98.90">
    <property type="match status" value="1"/>
</dbReference>
<dbReference type="HAMAP" id="MF_01810">
    <property type="entry name" value="YidC_type1"/>
    <property type="match status" value="1"/>
</dbReference>
<dbReference type="InterPro" id="IPR019998">
    <property type="entry name" value="Membr_insert_YidC"/>
</dbReference>
<dbReference type="InterPro" id="IPR028053">
    <property type="entry name" value="Membr_insert_YidC_N"/>
</dbReference>
<dbReference type="InterPro" id="IPR001708">
    <property type="entry name" value="YidC/ALB3/OXA1/COX18"/>
</dbReference>
<dbReference type="InterPro" id="IPR028055">
    <property type="entry name" value="YidC/Oxa/ALB_C"/>
</dbReference>
<dbReference type="InterPro" id="IPR047196">
    <property type="entry name" value="YidC_ALB_C"/>
</dbReference>
<dbReference type="InterPro" id="IPR038221">
    <property type="entry name" value="YidC_periplasmic_sf"/>
</dbReference>
<dbReference type="NCBIfam" id="NF002352">
    <property type="entry name" value="PRK01318.1-3"/>
    <property type="match status" value="1"/>
</dbReference>
<dbReference type="NCBIfam" id="TIGR03593">
    <property type="entry name" value="yidC_nterm"/>
    <property type="match status" value="1"/>
</dbReference>
<dbReference type="NCBIfam" id="TIGR03592">
    <property type="entry name" value="yidC_oxa1_cterm"/>
    <property type="match status" value="1"/>
</dbReference>
<dbReference type="PANTHER" id="PTHR12428:SF65">
    <property type="entry name" value="CYTOCHROME C OXIDASE ASSEMBLY PROTEIN COX18, MITOCHONDRIAL"/>
    <property type="match status" value="1"/>
</dbReference>
<dbReference type="PANTHER" id="PTHR12428">
    <property type="entry name" value="OXA1"/>
    <property type="match status" value="1"/>
</dbReference>
<dbReference type="Pfam" id="PF02096">
    <property type="entry name" value="60KD_IMP"/>
    <property type="match status" value="1"/>
</dbReference>
<dbReference type="Pfam" id="PF14849">
    <property type="entry name" value="YidC_periplas"/>
    <property type="match status" value="1"/>
</dbReference>
<dbReference type="PRINTS" id="PR00701">
    <property type="entry name" value="60KDINNERMP"/>
</dbReference>
<dbReference type="PRINTS" id="PR01900">
    <property type="entry name" value="YIDCPROTEIN"/>
</dbReference>
<gene>
    <name evidence="1" type="primary">yidC</name>
    <name type="ordered locus">FTW_1856</name>
</gene>
<comment type="function">
    <text evidence="1">Required for the insertion and/or proper folding and/or complex formation of integral membrane proteins into the membrane. Involved in integration of membrane proteins that insert both dependently and independently of the Sec translocase complex, as well as at least some lipoproteins. Aids folding of multispanning membrane proteins.</text>
</comment>
<comment type="subunit">
    <text evidence="1">Interacts with the Sec translocase complex via SecD. Specifically interacts with transmembrane segments of nascent integral membrane proteins during membrane integration.</text>
</comment>
<comment type="subcellular location">
    <subcellularLocation>
        <location evidence="1">Cell inner membrane</location>
        <topology evidence="1">Multi-pass membrane protein</topology>
    </subcellularLocation>
</comment>
<comment type="similarity">
    <text evidence="1">Belongs to the OXA1/ALB3/YidC family. Type 1 subfamily.</text>
</comment>
<proteinExistence type="inferred from homology"/>
<protein>
    <recommendedName>
        <fullName evidence="1">Membrane protein insertase YidC</fullName>
    </recommendedName>
    <alternativeName>
        <fullName evidence="1">Foldase YidC</fullName>
    </alternativeName>
    <alternativeName>
        <fullName evidence="1">Membrane integrase YidC</fullName>
    </alternativeName>
    <alternativeName>
        <fullName evidence="1">Membrane protein YidC</fullName>
    </alternativeName>
</protein>
<evidence type="ECO:0000255" key="1">
    <source>
        <dbReference type="HAMAP-Rule" id="MF_01810"/>
    </source>
</evidence>
<evidence type="ECO:0000256" key="2">
    <source>
        <dbReference type="SAM" id="MobiDB-lite"/>
    </source>
</evidence>
<name>YIDC_FRATW</name>
<keyword id="KW-0997">Cell inner membrane</keyword>
<keyword id="KW-1003">Cell membrane</keyword>
<keyword id="KW-0143">Chaperone</keyword>
<keyword id="KW-0472">Membrane</keyword>
<keyword id="KW-0653">Protein transport</keyword>
<keyword id="KW-0812">Transmembrane</keyword>
<keyword id="KW-1133">Transmembrane helix</keyword>
<keyword id="KW-0813">Transport</keyword>
<reference key="1">
    <citation type="journal article" date="2007" name="PLoS ONE">
        <title>Complete genomic characterization of a pathogenic A.II strain of Francisella tularensis subspecies tularensis.</title>
        <authorList>
            <person name="Beckstrom-Sternberg S.M."/>
            <person name="Auerbach R.K."/>
            <person name="Godbole S."/>
            <person name="Pearson J.V."/>
            <person name="Beckstrom-Sternberg J.S."/>
            <person name="Deng Z."/>
            <person name="Munk C."/>
            <person name="Kubota K."/>
            <person name="Zhou Y."/>
            <person name="Bruce D."/>
            <person name="Noronha J."/>
            <person name="Scheuermann R.H."/>
            <person name="Wang A."/>
            <person name="Wei X."/>
            <person name="Wang J."/>
            <person name="Hao J."/>
            <person name="Wagner D.M."/>
            <person name="Brettin T.S."/>
            <person name="Brown N."/>
            <person name="Gilna P."/>
            <person name="Keim P.S."/>
        </authorList>
    </citation>
    <scope>NUCLEOTIDE SEQUENCE [LARGE SCALE GENOMIC DNA]</scope>
    <source>
        <strain>WY96-3418</strain>
    </source>
</reference>